<keyword id="KW-0067">ATP-binding</keyword>
<keyword id="KW-0460">Magnesium</keyword>
<keyword id="KW-0547">Nucleotide-binding</keyword>
<keyword id="KW-1185">Reference proteome</keyword>
<keyword id="KW-0808">Transferase</keyword>
<keyword id="KW-0819">tRNA processing</keyword>
<dbReference type="EC" id="2.5.1.75" evidence="1"/>
<dbReference type="EMBL" id="CP000270">
    <property type="protein sequence ID" value="ABE29064.1"/>
    <property type="molecule type" value="Genomic_DNA"/>
</dbReference>
<dbReference type="RefSeq" id="WP_011486884.1">
    <property type="nucleotide sequence ID" value="NC_007951.1"/>
</dbReference>
<dbReference type="SMR" id="Q145C5"/>
<dbReference type="STRING" id="266265.Bxe_A3935"/>
<dbReference type="KEGG" id="bxb:DR64_1612"/>
<dbReference type="KEGG" id="bxe:Bxe_A3935"/>
<dbReference type="PATRIC" id="fig|266265.5.peg.548"/>
<dbReference type="eggNOG" id="COG0324">
    <property type="taxonomic scope" value="Bacteria"/>
</dbReference>
<dbReference type="OrthoDB" id="9776390at2"/>
<dbReference type="Proteomes" id="UP000001817">
    <property type="component" value="Chromosome 1"/>
</dbReference>
<dbReference type="GO" id="GO:0005524">
    <property type="term" value="F:ATP binding"/>
    <property type="evidence" value="ECO:0007669"/>
    <property type="project" value="UniProtKB-UniRule"/>
</dbReference>
<dbReference type="GO" id="GO:0052381">
    <property type="term" value="F:tRNA dimethylallyltransferase activity"/>
    <property type="evidence" value="ECO:0007669"/>
    <property type="project" value="UniProtKB-UniRule"/>
</dbReference>
<dbReference type="GO" id="GO:0006400">
    <property type="term" value="P:tRNA modification"/>
    <property type="evidence" value="ECO:0007669"/>
    <property type="project" value="TreeGrafter"/>
</dbReference>
<dbReference type="FunFam" id="1.10.20.140:FF:000001">
    <property type="entry name" value="tRNA dimethylallyltransferase"/>
    <property type="match status" value="1"/>
</dbReference>
<dbReference type="Gene3D" id="1.10.20.140">
    <property type="match status" value="1"/>
</dbReference>
<dbReference type="Gene3D" id="3.40.50.300">
    <property type="entry name" value="P-loop containing nucleotide triphosphate hydrolases"/>
    <property type="match status" value="1"/>
</dbReference>
<dbReference type="HAMAP" id="MF_00185">
    <property type="entry name" value="IPP_trans"/>
    <property type="match status" value="1"/>
</dbReference>
<dbReference type="InterPro" id="IPR039657">
    <property type="entry name" value="Dimethylallyltransferase"/>
</dbReference>
<dbReference type="InterPro" id="IPR018022">
    <property type="entry name" value="IPT"/>
</dbReference>
<dbReference type="InterPro" id="IPR027417">
    <property type="entry name" value="P-loop_NTPase"/>
</dbReference>
<dbReference type="NCBIfam" id="TIGR00174">
    <property type="entry name" value="miaA"/>
    <property type="match status" value="1"/>
</dbReference>
<dbReference type="PANTHER" id="PTHR11088">
    <property type="entry name" value="TRNA DIMETHYLALLYLTRANSFERASE"/>
    <property type="match status" value="1"/>
</dbReference>
<dbReference type="PANTHER" id="PTHR11088:SF60">
    <property type="entry name" value="TRNA DIMETHYLALLYLTRANSFERASE"/>
    <property type="match status" value="1"/>
</dbReference>
<dbReference type="Pfam" id="PF01715">
    <property type="entry name" value="IPPT"/>
    <property type="match status" value="1"/>
</dbReference>
<dbReference type="SUPFAM" id="SSF52540">
    <property type="entry name" value="P-loop containing nucleoside triphosphate hydrolases"/>
    <property type="match status" value="1"/>
</dbReference>
<feature type="chain" id="PRO_0000377099" description="tRNA dimethylallyltransferase">
    <location>
        <begin position="1"/>
        <end position="315"/>
    </location>
</feature>
<feature type="region of interest" description="Interaction with substrate tRNA" evidence="1">
    <location>
        <begin position="39"/>
        <end position="42"/>
    </location>
</feature>
<feature type="region of interest" description="Interaction with substrate tRNA" evidence="1">
    <location>
        <begin position="163"/>
        <end position="167"/>
    </location>
</feature>
<feature type="region of interest" description="Interaction with substrate tRNA" evidence="1">
    <location>
        <begin position="248"/>
        <end position="253"/>
    </location>
</feature>
<feature type="binding site" evidence="1">
    <location>
        <begin position="14"/>
        <end position="21"/>
    </location>
    <ligand>
        <name>ATP</name>
        <dbReference type="ChEBI" id="CHEBI:30616"/>
    </ligand>
</feature>
<feature type="binding site" evidence="1">
    <location>
        <begin position="16"/>
        <end position="21"/>
    </location>
    <ligand>
        <name>substrate</name>
    </ligand>
</feature>
<feature type="site" description="Interaction with substrate tRNA" evidence="1">
    <location>
        <position position="105"/>
    </location>
</feature>
<feature type="site" description="Interaction with substrate tRNA" evidence="1">
    <location>
        <position position="127"/>
    </location>
</feature>
<proteinExistence type="inferred from homology"/>
<protein>
    <recommendedName>
        <fullName evidence="1">tRNA dimethylallyltransferase</fullName>
        <ecNumber evidence="1">2.5.1.75</ecNumber>
    </recommendedName>
    <alternativeName>
        <fullName evidence="1">Dimethylallyl diphosphate:tRNA dimethylallyltransferase</fullName>
        <shortName evidence="1">DMAPP:tRNA dimethylallyltransferase</shortName>
        <shortName evidence="1">DMATase</shortName>
    </alternativeName>
    <alternativeName>
        <fullName evidence="1">Isopentenyl-diphosphate:tRNA isopentenyltransferase</fullName>
        <shortName evidence="1">IPP transferase</shortName>
        <shortName evidence="1">IPPT</shortName>
        <shortName evidence="1">IPTase</shortName>
    </alternativeName>
</protein>
<name>MIAA_PARXL</name>
<sequence>MTSRTPTTVPCLLGPTASGKTAAALALAARHPVEIISVDSALVYREMDIGTAKPTAEERAVAPHHLIDIVDPTDSYSAAQFRADTLRLTGEIHARGRLPLLVGGTMLYYKALTQGLNDLPAADADLRATLDADAAREGWPAMHARLAAVDPVTAARLAPNDSQRIQRALEVFMLTGQAMSALLAAPARVDDAAAAWRFVPVALEPSDRGVLHARIEKRFDAMLANGFVDEVVKLRERGDLSPEMPSMRCVGYRQVWEYLDGAVDYSTMRDKGVFATRQLCKRQLTWLRSMTERVVVDCCDPHATARVLEAIEALL</sequence>
<accession>Q145C5</accession>
<reference key="1">
    <citation type="journal article" date="2006" name="Proc. Natl. Acad. Sci. U.S.A.">
        <title>Burkholderia xenovorans LB400 harbors a multi-replicon, 9.73-Mbp genome shaped for versatility.</title>
        <authorList>
            <person name="Chain P.S.G."/>
            <person name="Denef V.J."/>
            <person name="Konstantinidis K.T."/>
            <person name="Vergez L.M."/>
            <person name="Agullo L."/>
            <person name="Reyes V.L."/>
            <person name="Hauser L."/>
            <person name="Cordova M."/>
            <person name="Gomez L."/>
            <person name="Gonzalez M."/>
            <person name="Land M."/>
            <person name="Lao V."/>
            <person name="Larimer F."/>
            <person name="LiPuma J.J."/>
            <person name="Mahenthiralingam E."/>
            <person name="Malfatti S.A."/>
            <person name="Marx C.J."/>
            <person name="Parnell J.J."/>
            <person name="Ramette A."/>
            <person name="Richardson P."/>
            <person name="Seeger M."/>
            <person name="Smith D."/>
            <person name="Spilker T."/>
            <person name="Sul W.J."/>
            <person name="Tsoi T.V."/>
            <person name="Ulrich L.E."/>
            <person name="Zhulin I.B."/>
            <person name="Tiedje J.M."/>
        </authorList>
    </citation>
    <scope>NUCLEOTIDE SEQUENCE [LARGE SCALE GENOMIC DNA]</scope>
    <source>
        <strain>LB400</strain>
    </source>
</reference>
<gene>
    <name evidence="1" type="primary">miaA</name>
    <name type="ordered locus">Bxeno_A0526</name>
    <name type="ORF">Bxe_A3935</name>
</gene>
<evidence type="ECO:0000255" key="1">
    <source>
        <dbReference type="HAMAP-Rule" id="MF_00185"/>
    </source>
</evidence>
<comment type="function">
    <text evidence="1">Catalyzes the transfer of a dimethylallyl group onto the adenine at position 37 in tRNAs that read codons beginning with uridine, leading to the formation of N6-(dimethylallyl)adenosine (i(6)A).</text>
</comment>
<comment type="catalytic activity">
    <reaction evidence="1">
        <text>adenosine(37) in tRNA + dimethylallyl diphosphate = N(6)-dimethylallyladenosine(37) in tRNA + diphosphate</text>
        <dbReference type="Rhea" id="RHEA:26482"/>
        <dbReference type="Rhea" id="RHEA-COMP:10162"/>
        <dbReference type="Rhea" id="RHEA-COMP:10375"/>
        <dbReference type="ChEBI" id="CHEBI:33019"/>
        <dbReference type="ChEBI" id="CHEBI:57623"/>
        <dbReference type="ChEBI" id="CHEBI:74411"/>
        <dbReference type="ChEBI" id="CHEBI:74415"/>
        <dbReference type="EC" id="2.5.1.75"/>
    </reaction>
</comment>
<comment type="cofactor">
    <cofactor evidence="1">
        <name>Mg(2+)</name>
        <dbReference type="ChEBI" id="CHEBI:18420"/>
    </cofactor>
</comment>
<comment type="subunit">
    <text evidence="1">Monomer.</text>
</comment>
<comment type="similarity">
    <text evidence="1">Belongs to the IPP transferase family.</text>
</comment>
<organism>
    <name type="scientific">Paraburkholderia xenovorans (strain LB400)</name>
    <dbReference type="NCBI Taxonomy" id="266265"/>
    <lineage>
        <taxon>Bacteria</taxon>
        <taxon>Pseudomonadati</taxon>
        <taxon>Pseudomonadota</taxon>
        <taxon>Betaproteobacteria</taxon>
        <taxon>Burkholderiales</taxon>
        <taxon>Burkholderiaceae</taxon>
        <taxon>Paraburkholderia</taxon>
    </lineage>
</organism>